<protein>
    <recommendedName>
        <fullName evidence="2">GTP cyclohydrolase 1</fullName>
        <ecNumber evidence="2">3.5.4.16</ecNumber>
    </recommendedName>
    <alternativeName>
        <fullName evidence="2">GTP cyclohydrolase I</fullName>
        <shortName evidence="2">GTP-CH-I</shortName>
    </alternativeName>
</protein>
<name>GCH1_STRMU</name>
<proteinExistence type="inferred from homology"/>
<comment type="catalytic activity">
    <reaction evidence="2">
        <text>GTP + H2O = 7,8-dihydroneopterin 3'-triphosphate + formate + H(+)</text>
        <dbReference type="Rhea" id="RHEA:17473"/>
        <dbReference type="ChEBI" id="CHEBI:15377"/>
        <dbReference type="ChEBI" id="CHEBI:15378"/>
        <dbReference type="ChEBI" id="CHEBI:15740"/>
        <dbReference type="ChEBI" id="CHEBI:37565"/>
        <dbReference type="ChEBI" id="CHEBI:58462"/>
        <dbReference type="EC" id="3.5.4.16"/>
    </reaction>
</comment>
<comment type="pathway">
    <text evidence="2">Cofactor biosynthesis; 7,8-dihydroneopterin triphosphate biosynthesis; 7,8-dihydroneopterin triphosphate from GTP: step 1/1.</text>
</comment>
<comment type="subunit">
    <text evidence="1">Toroid-shaped homodecamer, composed of two pentamers of five dimers.</text>
</comment>
<comment type="similarity">
    <text evidence="2">Belongs to the GTP cyclohydrolase I family.</text>
</comment>
<accession>Q8DUG2</accession>
<organism>
    <name type="scientific">Streptococcus mutans serotype c (strain ATCC 700610 / UA159)</name>
    <dbReference type="NCBI Taxonomy" id="210007"/>
    <lineage>
        <taxon>Bacteria</taxon>
        <taxon>Bacillati</taxon>
        <taxon>Bacillota</taxon>
        <taxon>Bacilli</taxon>
        <taxon>Lactobacillales</taxon>
        <taxon>Streptococcaceae</taxon>
        <taxon>Streptococcus</taxon>
    </lineage>
</organism>
<feature type="chain" id="PRO_0000119448" description="GTP cyclohydrolase 1">
    <location>
        <begin position="1"/>
        <end position="192"/>
    </location>
</feature>
<feature type="binding site" evidence="2">
    <location>
        <position position="81"/>
    </location>
    <ligand>
        <name>Zn(2+)</name>
        <dbReference type="ChEBI" id="CHEBI:29105"/>
    </ligand>
</feature>
<feature type="binding site" evidence="2">
    <location>
        <position position="84"/>
    </location>
    <ligand>
        <name>Zn(2+)</name>
        <dbReference type="ChEBI" id="CHEBI:29105"/>
    </ligand>
</feature>
<feature type="binding site" evidence="2">
    <location>
        <position position="153"/>
    </location>
    <ligand>
        <name>Zn(2+)</name>
        <dbReference type="ChEBI" id="CHEBI:29105"/>
    </ligand>
</feature>
<evidence type="ECO:0000250" key="1"/>
<evidence type="ECO:0000255" key="2">
    <source>
        <dbReference type="HAMAP-Rule" id="MF_00223"/>
    </source>
</evidence>
<reference key="1">
    <citation type="journal article" date="2002" name="Proc. Natl. Acad. Sci. U.S.A.">
        <title>Genome sequence of Streptococcus mutans UA159, a cariogenic dental pathogen.</title>
        <authorList>
            <person name="Ajdic D.J."/>
            <person name="McShan W.M."/>
            <person name="McLaughlin R.E."/>
            <person name="Savic G."/>
            <person name="Chang J."/>
            <person name="Carson M.B."/>
            <person name="Primeaux C."/>
            <person name="Tian R."/>
            <person name="Kenton S."/>
            <person name="Jia H.G."/>
            <person name="Lin S.P."/>
            <person name="Qian Y."/>
            <person name="Li S."/>
            <person name="Zhu H."/>
            <person name="Najar F.Z."/>
            <person name="Lai H."/>
            <person name="White J."/>
            <person name="Roe B.A."/>
            <person name="Ferretti J.J."/>
        </authorList>
    </citation>
    <scope>NUCLEOTIDE SEQUENCE [LARGE SCALE GENOMIC DNA]</scope>
    <source>
        <strain>ATCC 700610 / UA159</strain>
    </source>
</reference>
<dbReference type="EC" id="3.5.4.16" evidence="2"/>
<dbReference type="EMBL" id="AE014133">
    <property type="protein sequence ID" value="AAN58671.1"/>
    <property type="molecule type" value="Genomic_DNA"/>
</dbReference>
<dbReference type="RefSeq" id="NP_721365.1">
    <property type="nucleotide sequence ID" value="NC_004350.2"/>
</dbReference>
<dbReference type="SMR" id="Q8DUG2"/>
<dbReference type="STRING" id="210007.SMU_968"/>
<dbReference type="KEGG" id="smu:SMU_968"/>
<dbReference type="PATRIC" id="fig|210007.7.peg.862"/>
<dbReference type="eggNOG" id="COG0302">
    <property type="taxonomic scope" value="Bacteria"/>
</dbReference>
<dbReference type="HOGENOM" id="CLU_049768_3_3_9"/>
<dbReference type="OrthoDB" id="9801207at2"/>
<dbReference type="PhylomeDB" id="Q8DUG2"/>
<dbReference type="UniPathway" id="UPA00848">
    <property type="reaction ID" value="UER00151"/>
</dbReference>
<dbReference type="Proteomes" id="UP000002512">
    <property type="component" value="Chromosome"/>
</dbReference>
<dbReference type="GO" id="GO:0005737">
    <property type="term" value="C:cytoplasm"/>
    <property type="evidence" value="ECO:0007669"/>
    <property type="project" value="TreeGrafter"/>
</dbReference>
<dbReference type="GO" id="GO:0005525">
    <property type="term" value="F:GTP binding"/>
    <property type="evidence" value="ECO:0007669"/>
    <property type="project" value="UniProtKB-KW"/>
</dbReference>
<dbReference type="GO" id="GO:0003934">
    <property type="term" value="F:GTP cyclohydrolase I activity"/>
    <property type="evidence" value="ECO:0007669"/>
    <property type="project" value="UniProtKB-UniRule"/>
</dbReference>
<dbReference type="GO" id="GO:0008270">
    <property type="term" value="F:zinc ion binding"/>
    <property type="evidence" value="ECO:0007669"/>
    <property type="project" value="UniProtKB-UniRule"/>
</dbReference>
<dbReference type="GO" id="GO:0006730">
    <property type="term" value="P:one-carbon metabolic process"/>
    <property type="evidence" value="ECO:0007669"/>
    <property type="project" value="UniProtKB-UniRule"/>
</dbReference>
<dbReference type="GO" id="GO:0006729">
    <property type="term" value="P:tetrahydrobiopterin biosynthetic process"/>
    <property type="evidence" value="ECO:0007669"/>
    <property type="project" value="TreeGrafter"/>
</dbReference>
<dbReference type="GO" id="GO:0046654">
    <property type="term" value="P:tetrahydrofolate biosynthetic process"/>
    <property type="evidence" value="ECO:0007669"/>
    <property type="project" value="UniProtKB-UniRule"/>
</dbReference>
<dbReference type="FunFam" id="1.10.286.10:FF:000001">
    <property type="entry name" value="GTP cyclohydrolase 1"/>
    <property type="match status" value="1"/>
</dbReference>
<dbReference type="FunFam" id="3.30.1130.10:FF:000001">
    <property type="entry name" value="GTP cyclohydrolase 1"/>
    <property type="match status" value="1"/>
</dbReference>
<dbReference type="Gene3D" id="1.10.286.10">
    <property type="match status" value="1"/>
</dbReference>
<dbReference type="Gene3D" id="3.30.1130.10">
    <property type="match status" value="1"/>
</dbReference>
<dbReference type="HAMAP" id="MF_00223">
    <property type="entry name" value="FolE"/>
    <property type="match status" value="1"/>
</dbReference>
<dbReference type="InterPro" id="IPR043133">
    <property type="entry name" value="GTP-CH-I_C/QueF"/>
</dbReference>
<dbReference type="InterPro" id="IPR043134">
    <property type="entry name" value="GTP-CH-I_N"/>
</dbReference>
<dbReference type="InterPro" id="IPR001474">
    <property type="entry name" value="GTP_CycHdrlase_I"/>
</dbReference>
<dbReference type="InterPro" id="IPR018234">
    <property type="entry name" value="GTP_CycHdrlase_I_CS"/>
</dbReference>
<dbReference type="InterPro" id="IPR020602">
    <property type="entry name" value="GTP_CycHdrlase_I_dom"/>
</dbReference>
<dbReference type="NCBIfam" id="TIGR00063">
    <property type="entry name" value="folE"/>
    <property type="match status" value="1"/>
</dbReference>
<dbReference type="NCBIfam" id="NF006825">
    <property type="entry name" value="PRK09347.1-2"/>
    <property type="match status" value="1"/>
</dbReference>
<dbReference type="NCBIfam" id="NF006826">
    <property type="entry name" value="PRK09347.1-3"/>
    <property type="match status" value="1"/>
</dbReference>
<dbReference type="PANTHER" id="PTHR11109:SF7">
    <property type="entry name" value="GTP CYCLOHYDROLASE 1"/>
    <property type="match status" value="1"/>
</dbReference>
<dbReference type="PANTHER" id="PTHR11109">
    <property type="entry name" value="GTP CYCLOHYDROLASE I"/>
    <property type="match status" value="1"/>
</dbReference>
<dbReference type="Pfam" id="PF01227">
    <property type="entry name" value="GTP_cyclohydroI"/>
    <property type="match status" value="1"/>
</dbReference>
<dbReference type="SUPFAM" id="SSF55620">
    <property type="entry name" value="Tetrahydrobiopterin biosynthesis enzymes-like"/>
    <property type="match status" value="1"/>
</dbReference>
<dbReference type="PROSITE" id="PS00859">
    <property type="entry name" value="GTP_CYCLOHYDROL_1_1"/>
    <property type="match status" value="1"/>
</dbReference>
<dbReference type="PROSITE" id="PS00860">
    <property type="entry name" value="GTP_CYCLOHYDROL_1_2"/>
    <property type="match status" value="1"/>
</dbReference>
<gene>
    <name evidence="2" type="primary">folE</name>
    <name type="ordered locus">SMU_968</name>
</gene>
<keyword id="KW-0342">GTP-binding</keyword>
<keyword id="KW-0378">Hydrolase</keyword>
<keyword id="KW-0479">Metal-binding</keyword>
<keyword id="KW-0547">Nucleotide-binding</keyword>
<keyword id="KW-0554">One-carbon metabolism</keyword>
<keyword id="KW-1185">Reference proteome</keyword>
<keyword id="KW-0862">Zinc</keyword>
<sequence>MNEKIMSDQKKIEEAVYQLLEALGEDPNREGLLDTPKRVAKMYQEMFAGLNEDPKDQFTAVFSEEHEDVVLVKDIPFYSMCEHHLVPFHGLAHVAYIPSDGCVTGLSKLARAVEVVSKRPQLQERLTVQIANALEEALKPKGVLVMIEAEHMCMTMRGIKKPGSKTVTRVVRGICQSDKETRQEIIAMIHHN</sequence>